<dbReference type="EC" id="1.6.5.4"/>
<dbReference type="EMBL" id="D26392">
    <property type="protein sequence ID" value="BAA05408.1"/>
    <property type="molecule type" value="mRNA"/>
</dbReference>
<dbReference type="PIR" id="JU0182">
    <property type="entry name" value="JU0182"/>
</dbReference>
<dbReference type="RefSeq" id="NP_001267683.1">
    <property type="nucleotide sequence ID" value="NM_001280754.1"/>
</dbReference>
<dbReference type="SMR" id="Q42711"/>
<dbReference type="GeneID" id="101210277"/>
<dbReference type="KEGG" id="csv:101210277"/>
<dbReference type="eggNOG" id="KOG1336">
    <property type="taxonomic scope" value="Eukaryota"/>
</dbReference>
<dbReference type="OrthoDB" id="432169at2759"/>
<dbReference type="GO" id="GO:0005737">
    <property type="term" value="C:cytoplasm"/>
    <property type="evidence" value="ECO:0007669"/>
    <property type="project" value="UniProtKB-SubCell"/>
</dbReference>
<dbReference type="GO" id="GO:0016656">
    <property type="term" value="F:monodehydroascorbate reductase (NADH) activity"/>
    <property type="evidence" value="ECO:0007669"/>
    <property type="project" value="UniProtKB-EC"/>
</dbReference>
<dbReference type="FunFam" id="3.30.390.30:FF:000013">
    <property type="entry name" value="Monodehydroascorbate reductase 3"/>
    <property type="match status" value="1"/>
</dbReference>
<dbReference type="FunFam" id="3.50.50.60:FF:000155">
    <property type="entry name" value="Monodehydroascorbate reductase 3"/>
    <property type="match status" value="1"/>
</dbReference>
<dbReference type="Gene3D" id="3.30.390.30">
    <property type="match status" value="1"/>
</dbReference>
<dbReference type="Gene3D" id="3.50.50.60">
    <property type="entry name" value="FAD/NAD(P)-binding domain"/>
    <property type="match status" value="2"/>
</dbReference>
<dbReference type="InterPro" id="IPR050446">
    <property type="entry name" value="FAD-oxidoreductase/Apoptosis"/>
</dbReference>
<dbReference type="InterPro" id="IPR036188">
    <property type="entry name" value="FAD/NAD-bd_sf"/>
</dbReference>
<dbReference type="InterPro" id="IPR023753">
    <property type="entry name" value="FAD/NAD-binding_dom"/>
</dbReference>
<dbReference type="InterPro" id="IPR016156">
    <property type="entry name" value="FAD/NAD-linked_Rdtase_dimer_sf"/>
</dbReference>
<dbReference type="InterPro" id="IPR048618">
    <property type="entry name" value="MDHAR3-like_C"/>
</dbReference>
<dbReference type="PANTHER" id="PTHR43557">
    <property type="entry name" value="APOPTOSIS-INDUCING FACTOR 1"/>
    <property type="match status" value="1"/>
</dbReference>
<dbReference type="PANTHER" id="PTHR43557:SF5">
    <property type="entry name" value="MONODEHYDROASCORBATE REDUCTASE 1, PEROXISOMAL"/>
    <property type="match status" value="1"/>
</dbReference>
<dbReference type="Pfam" id="PF21791">
    <property type="entry name" value="MDHAR3-like_C"/>
    <property type="match status" value="1"/>
</dbReference>
<dbReference type="Pfam" id="PF07992">
    <property type="entry name" value="Pyr_redox_2"/>
    <property type="match status" value="1"/>
</dbReference>
<dbReference type="PRINTS" id="PR00368">
    <property type="entry name" value="FADPNR"/>
</dbReference>
<dbReference type="PRINTS" id="PR00411">
    <property type="entry name" value="PNDRDTASEI"/>
</dbReference>
<dbReference type="SUPFAM" id="SSF51905">
    <property type="entry name" value="FAD/NAD(P)-binding domain"/>
    <property type="match status" value="1"/>
</dbReference>
<dbReference type="SUPFAM" id="SSF55424">
    <property type="entry name" value="FAD/NAD-linked reductases, dimerisation (C-terminal) domain"/>
    <property type="match status" value="1"/>
</dbReference>
<name>MDARS_CUCSA</name>
<protein>
    <recommendedName>
        <fullName>Monodehydroascorbate reductase, seedling isozyme</fullName>
        <shortName>MDAR seedling</shortName>
        <ecNumber>1.6.5.4</ecNumber>
    </recommendedName>
    <alternativeName>
        <fullName>Ascorbate free radical reductase seedling</fullName>
        <shortName>AFR reductase seedling</shortName>
    </alternativeName>
</protein>
<organism evidence="6">
    <name type="scientific">Cucumis sativus</name>
    <name type="common">Cucumber</name>
    <dbReference type="NCBI Taxonomy" id="3659"/>
    <lineage>
        <taxon>Eukaryota</taxon>
        <taxon>Viridiplantae</taxon>
        <taxon>Streptophyta</taxon>
        <taxon>Embryophyta</taxon>
        <taxon>Tracheophyta</taxon>
        <taxon>Spermatophyta</taxon>
        <taxon>Magnoliopsida</taxon>
        <taxon>eudicotyledons</taxon>
        <taxon>Gunneridae</taxon>
        <taxon>Pentapetalae</taxon>
        <taxon>rosids</taxon>
        <taxon>fabids</taxon>
        <taxon>Cucurbitales</taxon>
        <taxon>Cucurbitaceae</taxon>
        <taxon>Benincaseae</taxon>
        <taxon>Cucumis</taxon>
    </lineage>
</organism>
<sequence>MADETFKYVILGGGVAAGYAAREFVKQGLNPGELAIISKEAVAPYERPALSKAYLFPESPARLPGFHVCVGSGGERLLPDWYKEKGIELILSTEIVEADLPAKRLRSAHGKIYNYQTLIIATGSTVIKLSDFGVQGADAKNIFYLREIDDADQLVEAIKAKENGKVVVVGGGYIGLELGAALRINNFDVSMVYPEPWCMPRLFTPEIAAFYEGYYAQKGITIIKGTVAVGFTVDTNGEVKEVKLKDGRVLEADIVVVGVGARPLTSLFKGQIVEEKGGIKTDEFFKTSVPDVYAVGDVATFPLKLYNELRRVEHVDHSRKSAEQAVKAIKASEEGKAIEEYDYLPYFYSRSFDLSWQFYGDNVGDAVLFGDNSPDSATHKFGSYWIKDGKVVGAFLESGSPEENKAIAKVARIQPSVESSDLLLKEGISFASKV</sequence>
<proteinExistence type="evidence at transcript level"/>
<reference evidence="5" key="1">
    <citation type="journal article" date="1994" name="Plant Cell Physiol.">
        <title>cDNA cloning of monodehydroascorbate radical reductase from Cucumber: a high degree of homology in terms of amino acid sequence between this enzyme and bacterial flavoenzymes.</title>
        <authorList>
            <person name="Sano S."/>
            <person name="Asada K."/>
        </authorList>
    </citation>
    <scope>NUCLEOTIDE SEQUENCE [MRNA]</scope>
    <source>
        <tissue evidence="4">Seedling cotyledon</tissue>
    </source>
</reference>
<comment type="function">
    <text>Catalyzes the conversion of monodehydroascorbate to ascorbate, oxidizing NADH in the process.</text>
</comment>
<comment type="catalytic activity">
    <reaction evidence="1">
        <text>2 monodehydro-L-ascorbate radical + NADH + H(+) = 2 L-ascorbate + NAD(+)</text>
        <dbReference type="Rhea" id="RHEA:14581"/>
        <dbReference type="ChEBI" id="CHEBI:15378"/>
        <dbReference type="ChEBI" id="CHEBI:38290"/>
        <dbReference type="ChEBI" id="CHEBI:57540"/>
        <dbReference type="ChEBI" id="CHEBI:57945"/>
        <dbReference type="ChEBI" id="CHEBI:59513"/>
        <dbReference type="EC" id="1.6.5.4"/>
    </reaction>
</comment>
<comment type="cofactor">
    <cofactor evidence="3 5">
        <name>FAD</name>
        <dbReference type="ChEBI" id="CHEBI:57692"/>
    </cofactor>
</comment>
<comment type="subcellular location">
    <subcellularLocation>
        <location evidence="5">Cytoplasm</location>
    </subcellularLocation>
</comment>
<comment type="similarity">
    <text evidence="5">Belongs to the FAD-dependent oxidoreductase family.</text>
</comment>
<keyword id="KW-0963">Cytoplasm</keyword>
<keyword id="KW-0274">FAD</keyword>
<keyword id="KW-0285">Flavoprotein</keyword>
<keyword id="KW-0520">NAD</keyword>
<keyword id="KW-0521">NADP</keyword>
<keyword id="KW-0560">Oxidoreductase</keyword>
<keyword id="KW-0676">Redox-active center</keyword>
<accession>Q42711</accession>
<evidence type="ECO:0000250" key="1">
    <source>
        <dbReference type="UniProtKB" id="P83966"/>
    </source>
</evidence>
<evidence type="ECO:0000250" key="2">
    <source>
        <dbReference type="UniProtKB" id="Q652L6"/>
    </source>
</evidence>
<evidence type="ECO:0000255" key="3">
    <source>
        <dbReference type="RuleBase" id="RU000401"/>
    </source>
</evidence>
<evidence type="ECO:0000269" key="4">
    <source>
    </source>
</evidence>
<evidence type="ECO:0000305" key="5"/>
<evidence type="ECO:0000312" key="6">
    <source>
        <dbReference type="EMBL" id="BAA05408.1"/>
    </source>
</evidence>
<feature type="chain" id="PRO_0000209140" description="Monodehydroascorbate reductase, seedling isozyme">
    <location>
        <begin position="1"/>
        <end position="434"/>
    </location>
</feature>
<feature type="binding site" evidence="2">
    <location>
        <begin position="13"/>
        <end position="16"/>
    </location>
    <ligand>
        <name>FAD</name>
        <dbReference type="ChEBI" id="CHEBI:57692"/>
    </ligand>
</feature>
<feature type="binding site" evidence="2">
    <location>
        <position position="40"/>
    </location>
    <ligand>
        <name>FAD</name>
        <dbReference type="ChEBI" id="CHEBI:57692"/>
    </ligand>
</feature>
<feature type="binding site" evidence="2">
    <location>
        <position position="47"/>
    </location>
    <ligand>
        <name>FAD</name>
        <dbReference type="ChEBI" id="CHEBI:57692"/>
    </ligand>
</feature>
<feature type="binding site" evidence="2">
    <location>
        <position position="52"/>
    </location>
    <ligand>
        <name>FAD</name>
        <dbReference type="ChEBI" id="CHEBI:57692"/>
    </ligand>
</feature>
<feature type="binding site" evidence="2">
    <location>
        <position position="95"/>
    </location>
    <ligand>
        <name>FAD</name>
        <dbReference type="ChEBI" id="CHEBI:57692"/>
    </ligand>
</feature>
<feature type="binding site" evidence="2">
    <location>
        <begin position="146"/>
        <end position="147"/>
    </location>
    <ligand>
        <name>FAD</name>
        <dbReference type="ChEBI" id="CHEBI:57692"/>
    </ligand>
</feature>
<feature type="binding site" evidence="2">
    <location>
        <begin position="171"/>
        <end position="177"/>
    </location>
    <ligand>
        <name>NAD(+)</name>
        <dbReference type="ChEBI" id="CHEBI:57540"/>
    </ligand>
</feature>
<feature type="binding site" evidence="2">
    <location>
        <begin position="173"/>
        <end position="177"/>
    </location>
    <ligand>
        <name>NADP(+)</name>
        <dbReference type="ChEBI" id="CHEBI:58349"/>
    </ligand>
</feature>
<feature type="binding site" evidence="2">
    <location>
        <position position="195"/>
    </location>
    <ligand>
        <name>NAD(+)</name>
        <dbReference type="ChEBI" id="CHEBI:57540"/>
    </ligand>
</feature>
<feature type="binding site" evidence="2">
    <location>
        <position position="201"/>
    </location>
    <ligand>
        <name>NAD(+)</name>
        <dbReference type="ChEBI" id="CHEBI:57540"/>
    </ligand>
</feature>
<feature type="binding site" evidence="2">
    <location>
        <position position="201"/>
    </location>
    <ligand>
        <name>NADP(+)</name>
        <dbReference type="ChEBI" id="CHEBI:58349"/>
    </ligand>
</feature>
<feature type="binding site" evidence="2">
    <location>
        <position position="260"/>
    </location>
    <ligand>
        <name>NAD(+)</name>
        <dbReference type="ChEBI" id="CHEBI:57540"/>
    </ligand>
</feature>
<feature type="binding site" evidence="2">
    <location>
        <position position="260"/>
    </location>
    <ligand>
        <name>NADP(+)</name>
        <dbReference type="ChEBI" id="CHEBI:58349"/>
    </ligand>
</feature>
<feature type="binding site" evidence="2">
    <location>
        <position position="297"/>
    </location>
    <ligand>
        <name>FAD</name>
        <dbReference type="ChEBI" id="CHEBI:57692"/>
    </ligand>
</feature>
<feature type="binding site" evidence="2">
    <location>
        <begin position="313"/>
        <end position="314"/>
    </location>
    <ligand>
        <name>NAD(+)</name>
        <dbReference type="ChEBI" id="CHEBI:57540"/>
    </ligand>
</feature>
<feature type="binding site" evidence="2">
    <location>
        <begin position="313"/>
        <end position="314"/>
    </location>
    <ligand>
        <name>NADP(+)</name>
        <dbReference type="ChEBI" id="CHEBI:58349"/>
    </ligand>
</feature>
<feature type="binding site" evidence="2">
    <location>
        <position position="315"/>
    </location>
    <ligand>
        <name>FAD</name>
        <dbReference type="ChEBI" id="CHEBI:57692"/>
    </ligand>
</feature>
<feature type="binding site" evidence="2">
    <location>
        <position position="319"/>
    </location>
    <ligand>
        <name>L-ascorbate</name>
        <dbReference type="ChEBI" id="CHEBI:38290"/>
    </ligand>
</feature>
<feature type="binding site" evidence="2">
    <location>
        <position position="348"/>
    </location>
    <ligand>
        <name>FAD</name>
        <dbReference type="ChEBI" id="CHEBI:57692"/>
    </ligand>
</feature>
<feature type="binding site" evidence="2">
    <location>
        <position position="348"/>
    </location>
    <ligand>
        <name>NAD(+)</name>
        <dbReference type="ChEBI" id="CHEBI:57540"/>
    </ligand>
</feature>
<feature type="binding site" evidence="2">
    <location>
        <position position="348"/>
    </location>
    <ligand>
        <name>NADP(+)</name>
        <dbReference type="ChEBI" id="CHEBI:58349"/>
    </ligand>
</feature>
<feature type="binding site" evidence="2">
    <location>
        <position position="350"/>
    </location>
    <ligand>
        <name>L-ascorbate</name>
        <dbReference type="ChEBI" id="CHEBI:38290"/>
    </ligand>
</feature>